<accession>P66490</accession>
<accession>G0KAF0</accession>
<accession>Q8YHN6</accession>
<accession>Q92QG6</accession>
<organism>
    <name type="scientific">Brucella suis biovar 1 (strain 1330)</name>
    <dbReference type="NCBI Taxonomy" id="204722"/>
    <lineage>
        <taxon>Bacteria</taxon>
        <taxon>Pseudomonadati</taxon>
        <taxon>Pseudomonadota</taxon>
        <taxon>Alphaproteobacteria</taxon>
        <taxon>Hyphomicrobiales</taxon>
        <taxon>Brucellaceae</taxon>
        <taxon>Brucella/Ochrobactrum group</taxon>
        <taxon>Brucella</taxon>
    </lineage>
</organism>
<reference key="1">
    <citation type="journal article" date="2002" name="Proc. Natl. Acad. Sci. U.S.A.">
        <title>The Brucella suis genome reveals fundamental similarities between animal and plant pathogens and symbionts.</title>
        <authorList>
            <person name="Paulsen I.T."/>
            <person name="Seshadri R."/>
            <person name="Nelson K.E."/>
            <person name="Eisen J.A."/>
            <person name="Heidelberg J.F."/>
            <person name="Read T.D."/>
            <person name="Dodson R.J."/>
            <person name="Umayam L.A."/>
            <person name="Brinkac L.M."/>
            <person name="Beanan M.J."/>
            <person name="Daugherty S.C."/>
            <person name="DeBoy R.T."/>
            <person name="Durkin A.S."/>
            <person name="Kolonay J.F."/>
            <person name="Madupu R."/>
            <person name="Nelson W.C."/>
            <person name="Ayodeji B."/>
            <person name="Kraul M."/>
            <person name="Shetty J."/>
            <person name="Malek J.A."/>
            <person name="Van Aken S.E."/>
            <person name="Riedmuller S."/>
            <person name="Tettelin H."/>
            <person name="Gill S.R."/>
            <person name="White O."/>
            <person name="Salzberg S.L."/>
            <person name="Hoover D.L."/>
            <person name="Lindler L.E."/>
            <person name="Halling S.M."/>
            <person name="Boyle S.M."/>
            <person name="Fraser C.M."/>
        </authorList>
    </citation>
    <scope>NUCLEOTIDE SEQUENCE [LARGE SCALE GENOMIC DNA]</scope>
    <source>
        <strain>1330</strain>
    </source>
</reference>
<reference key="2">
    <citation type="journal article" date="2011" name="J. Bacteriol.">
        <title>Revised genome sequence of Brucella suis 1330.</title>
        <authorList>
            <person name="Tae H."/>
            <person name="Shallom S."/>
            <person name="Settlage R."/>
            <person name="Preston D."/>
            <person name="Adams L.G."/>
            <person name="Garner H.R."/>
        </authorList>
    </citation>
    <scope>NUCLEOTIDE SEQUENCE [LARGE SCALE GENOMIC DNA]</scope>
    <source>
        <strain>1330</strain>
    </source>
</reference>
<dbReference type="EMBL" id="AE014291">
    <property type="protein sequence ID" value="AAN30148.1"/>
    <property type="molecule type" value="Genomic_DNA"/>
</dbReference>
<dbReference type="EMBL" id="CP002997">
    <property type="protein sequence ID" value="AEM18566.1"/>
    <property type="molecule type" value="Genomic_DNA"/>
</dbReference>
<dbReference type="RefSeq" id="WP_002964358.1">
    <property type="nucleotide sequence ID" value="NZ_KN046804.1"/>
</dbReference>
<dbReference type="SMR" id="P66490"/>
<dbReference type="GeneID" id="97533528"/>
<dbReference type="KEGG" id="bms:BR1229"/>
<dbReference type="KEGG" id="bsi:BS1330_I1225"/>
<dbReference type="PATRIC" id="fig|204722.21.peg.2247"/>
<dbReference type="HOGENOM" id="CLU_144911_0_1_5"/>
<dbReference type="Proteomes" id="UP000007104">
    <property type="component" value="Chromosome I"/>
</dbReference>
<dbReference type="GO" id="GO:0005737">
    <property type="term" value="C:cytoplasm"/>
    <property type="evidence" value="ECO:0007669"/>
    <property type="project" value="UniProtKB-ARBA"/>
</dbReference>
<dbReference type="GO" id="GO:0015935">
    <property type="term" value="C:small ribosomal subunit"/>
    <property type="evidence" value="ECO:0007669"/>
    <property type="project" value="InterPro"/>
</dbReference>
<dbReference type="GO" id="GO:0019843">
    <property type="term" value="F:rRNA binding"/>
    <property type="evidence" value="ECO:0007669"/>
    <property type="project" value="UniProtKB-UniRule"/>
</dbReference>
<dbReference type="GO" id="GO:0003735">
    <property type="term" value="F:structural constituent of ribosome"/>
    <property type="evidence" value="ECO:0007669"/>
    <property type="project" value="InterPro"/>
</dbReference>
<dbReference type="GO" id="GO:0000028">
    <property type="term" value="P:ribosomal small subunit assembly"/>
    <property type="evidence" value="ECO:0007669"/>
    <property type="project" value="TreeGrafter"/>
</dbReference>
<dbReference type="GO" id="GO:0006412">
    <property type="term" value="P:translation"/>
    <property type="evidence" value="ECO:0007669"/>
    <property type="project" value="UniProtKB-UniRule"/>
</dbReference>
<dbReference type="FunFam" id="3.30.860.10:FF:000001">
    <property type="entry name" value="30S ribosomal protein S19"/>
    <property type="match status" value="1"/>
</dbReference>
<dbReference type="Gene3D" id="3.30.860.10">
    <property type="entry name" value="30s Ribosomal Protein S19, Chain A"/>
    <property type="match status" value="1"/>
</dbReference>
<dbReference type="HAMAP" id="MF_00531">
    <property type="entry name" value="Ribosomal_uS19"/>
    <property type="match status" value="1"/>
</dbReference>
<dbReference type="InterPro" id="IPR002222">
    <property type="entry name" value="Ribosomal_uS19"/>
</dbReference>
<dbReference type="InterPro" id="IPR005732">
    <property type="entry name" value="Ribosomal_uS19_bac-type"/>
</dbReference>
<dbReference type="InterPro" id="IPR020934">
    <property type="entry name" value="Ribosomal_uS19_CS"/>
</dbReference>
<dbReference type="InterPro" id="IPR023575">
    <property type="entry name" value="Ribosomal_uS19_SF"/>
</dbReference>
<dbReference type="NCBIfam" id="TIGR01050">
    <property type="entry name" value="rpsS_bact"/>
    <property type="match status" value="1"/>
</dbReference>
<dbReference type="PANTHER" id="PTHR11880">
    <property type="entry name" value="RIBOSOMAL PROTEIN S19P FAMILY MEMBER"/>
    <property type="match status" value="1"/>
</dbReference>
<dbReference type="PANTHER" id="PTHR11880:SF8">
    <property type="entry name" value="SMALL RIBOSOMAL SUBUNIT PROTEIN US19M"/>
    <property type="match status" value="1"/>
</dbReference>
<dbReference type="Pfam" id="PF00203">
    <property type="entry name" value="Ribosomal_S19"/>
    <property type="match status" value="1"/>
</dbReference>
<dbReference type="PIRSF" id="PIRSF002144">
    <property type="entry name" value="Ribosomal_S19"/>
    <property type="match status" value="1"/>
</dbReference>
<dbReference type="PRINTS" id="PR00975">
    <property type="entry name" value="RIBOSOMALS19"/>
</dbReference>
<dbReference type="SUPFAM" id="SSF54570">
    <property type="entry name" value="Ribosomal protein S19"/>
    <property type="match status" value="1"/>
</dbReference>
<dbReference type="PROSITE" id="PS00323">
    <property type="entry name" value="RIBOSOMAL_S19"/>
    <property type="match status" value="1"/>
</dbReference>
<protein>
    <recommendedName>
        <fullName evidence="1">Small ribosomal subunit protein uS19</fullName>
    </recommendedName>
    <alternativeName>
        <fullName evidence="2">30S ribosomal protein S19</fullName>
    </alternativeName>
</protein>
<keyword id="KW-0687">Ribonucleoprotein</keyword>
<keyword id="KW-0689">Ribosomal protein</keyword>
<keyword id="KW-0694">RNA-binding</keyword>
<keyword id="KW-0699">rRNA-binding</keyword>
<proteinExistence type="inferred from homology"/>
<feature type="chain" id="PRO_0000129793" description="Small ribosomal subunit protein uS19">
    <location>
        <begin position="1"/>
        <end position="92"/>
    </location>
</feature>
<gene>
    <name evidence="1" type="primary">rpsS</name>
    <name type="ordered locus">BR1229</name>
    <name type="ordered locus">BS1330_I1225</name>
</gene>
<evidence type="ECO:0000255" key="1">
    <source>
        <dbReference type="HAMAP-Rule" id="MF_00531"/>
    </source>
</evidence>
<evidence type="ECO:0000305" key="2"/>
<sequence length="92" mass="10444">MARSVWKGPFVDGYLLKKAEKVREGGRNEVIKMWSRRSTILPQFVGLTFGVYNGNKHVPVSVSEEMVGHKFGEFAPTRTYYGHGADKKAKRK</sequence>
<name>RS19_BRUSU</name>
<comment type="function">
    <text evidence="1">Protein S19 forms a complex with S13 that binds strongly to the 16S ribosomal RNA.</text>
</comment>
<comment type="similarity">
    <text evidence="1">Belongs to the universal ribosomal protein uS19 family.</text>
</comment>